<reference key="1">
    <citation type="submission" date="2007-05" db="EMBL/GenBank/DDBJ databases">
        <title>Complete sequence of Geobacter uraniireducens Rf4.</title>
        <authorList>
            <consortium name="US DOE Joint Genome Institute"/>
            <person name="Copeland A."/>
            <person name="Lucas S."/>
            <person name="Lapidus A."/>
            <person name="Barry K."/>
            <person name="Detter J.C."/>
            <person name="Glavina del Rio T."/>
            <person name="Hammon N."/>
            <person name="Israni S."/>
            <person name="Dalin E."/>
            <person name="Tice H."/>
            <person name="Pitluck S."/>
            <person name="Chertkov O."/>
            <person name="Brettin T."/>
            <person name="Bruce D."/>
            <person name="Han C."/>
            <person name="Schmutz J."/>
            <person name="Larimer F."/>
            <person name="Land M."/>
            <person name="Hauser L."/>
            <person name="Kyrpides N."/>
            <person name="Mikhailova N."/>
            <person name="Shelobolina E."/>
            <person name="Aklujkar M."/>
            <person name="Lovley D."/>
            <person name="Richardson P."/>
        </authorList>
    </citation>
    <scope>NUCLEOTIDE SEQUENCE [LARGE SCALE GENOMIC DNA]</scope>
    <source>
        <strain>ATCC BAA-1134 / JCM 13001 / Rf4</strain>
    </source>
</reference>
<feature type="chain" id="PRO_0000391154" description="NADH-quinone oxidoreductase subunit N">
    <location>
        <begin position="1"/>
        <end position="469"/>
    </location>
</feature>
<feature type="transmembrane region" description="Helical" evidence="1">
    <location>
        <begin position="6"/>
        <end position="26"/>
    </location>
</feature>
<feature type="transmembrane region" description="Helical" evidence="1">
    <location>
        <begin position="37"/>
        <end position="57"/>
    </location>
</feature>
<feature type="transmembrane region" description="Helical" evidence="1">
    <location>
        <begin position="61"/>
        <end position="81"/>
    </location>
</feature>
<feature type="transmembrane region" description="Helical" evidence="1">
    <location>
        <begin position="96"/>
        <end position="116"/>
    </location>
</feature>
<feature type="transmembrane region" description="Helical" evidence="1">
    <location>
        <begin position="121"/>
        <end position="141"/>
    </location>
</feature>
<feature type="transmembrane region" description="Helical" evidence="1">
    <location>
        <begin position="156"/>
        <end position="176"/>
    </location>
</feature>
<feature type="transmembrane region" description="Helical" evidence="1">
    <location>
        <begin position="197"/>
        <end position="217"/>
    </location>
</feature>
<feature type="transmembrane region" description="Helical" evidence="1">
    <location>
        <begin position="234"/>
        <end position="254"/>
    </location>
</feature>
<feature type="transmembrane region" description="Helical" evidence="1">
    <location>
        <begin position="263"/>
        <end position="283"/>
    </location>
</feature>
<feature type="transmembrane region" description="Helical" evidence="1">
    <location>
        <begin position="291"/>
        <end position="311"/>
    </location>
</feature>
<feature type="transmembrane region" description="Helical" evidence="1">
    <location>
        <begin position="315"/>
        <end position="335"/>
    </location>
</feature>
<feature type="transmembrane region" description="Helical" evidence="1">
    <location>
        <begin position="362"/>
        <end position="382"/>
    </location>
</feature>
<feature type="transmembrane region" description="Helical" evidence="1">
    <location>
        <begin position="397"/>
        <end position="419"/>
    </location>
</feature>
<feature type="transmembrane region" description="Helical" evidence="1">
    <location>
        <begin position="441"/>
        <end position="461"/>
    </location>
</feature>
<sequence>MTVADIWIIMPLAILAGASLLILLLGAVVPGRYGTAVGVAACVGAALWALQLQPAALSQTLGVAFTPFARFFTVLFSLTAAATLLLSHDHNVRRDISGEEYPATVIFAAFGMAVVSASANLLILFLGLEALTFAFYILVAIDLNRAESAEAGLKYLLLGAISAACIAFGIALLYAAAGTLAIPEVVRLTLSAGAQDPIALAGWGLLLIGIAFKISLVPAHHWTPDVYQGAPTPVVAFLSTASKGAAIAFLLLLLPSGSGFKTLHTPLWWLSLLSMLVGNLAALLQTNLKRMLAYSSIAQMGYLVLALLTGSSEGFAAVILYVVVYTAMNLAAFGAVASLTESVGMENVEDYRGVGYSRPFQAGILALALFALAGIPPTAGFIGKFFIFYAAFRGGEIPLAIVGILAAAVSAYYYLRVVVNLYMHAGDAPESRKSASMTESIALSAAALVILAVGIYPSPLLRLIDSILR</sequence>
<name>NUON_GEOUR</name>
<evidence type="ECO:0000255" key="1">
    <source>
        <dbReference type="HAMAP-Rule" id="MF_00445"/>
    </source>
</evidence>
<accession>A5GD16</accession>
<keyword id="KW-0997">Cell inner membrane</keyword>
<keyword id="KW-1003">Cell membrane</keyword>
<keyword id="KW-0472">Membrane</keyword>
<keyword id="KW-0520">NAD</keyword>
<keyword id="KW-0874">Quinone</keyword>
<keyword id="KW-1185">Reference proteome</keyword>
<keyword id="KW-1278">Translocase</keyword>
<keyword id="KW-0812">Transmembrane</keyword>
<keyword id="KW-1133">Transmembrane helix</keyword>
<keyword id="KW-0813">Transport</keyword>
<keyword id="KW-0830">Ubiquinone</keyword>
<organism>
    <name type="scientific">Geotalea uraniireducens (strain Rf4)</name>
    <name type="common">Geobacter uraniireducens</name>
    <dbReference type="NCBI Taxonomy" id="351605"/>
    <lineage>
        <taxon>Bacteria</taxon>
        <taxon>Pseudomonadati</taxon>
        <taxon>Thermodesulfobacteriota</taxon>
        <taxon>Desulfuromonadia</taxon>
        <taxon>Geobacterales</taxon>
        <taxon>Geobacteraceae</taxon>
        <taxon>Geotalea</taxon>
    </lineage>
</organism>
<comment type="function">
    <text evidence="1">NDH-1 shuttles electrons from NADH, via FMN and iron-sulfur (Fe-S) centers, to quinones in the respiratory chain. The immediate electron acceptor for the enzyme in this species is believed to be ubiquinone. Couples the redox reaction to proton translocation (for every two electrons transferred, four hydrogen ions are translocated across the cytoplasmic membrane), and thus conserves the redox energy in a proton gradient.</text>
</comment>
<comment type="catalytic activity">
    <reaction evidence="1">
        <text>a quinone + NADH + 5 H(+)(in) = a quinol + NAD(+) + 4 H(+)(out)</text>
        <dbReference type="Rhea" id="RHEA:57888"/>
        <dbReference type="ChEBI" id="CHEBI:15378"/>
        <dbReference type="ChEBI" id="CHEBI:24646"/>
        <dbReference type="ChEBI" id="CHEBI:57540"/>
        <dbReference type="ChEBI" id="CHEBI:57945"/>
        <dbReference type="ChEBI" id="CHEBI:132124"/>
    </reaction>
</comment>
<comment type="subunit">
    <text evidence="1">NDH-1 is composed of 14 different subunits. Subunits NuoA, H, J, K, L, M, N constitute the membrane sector of the complex.</text>
</comment>
<comment type="subcellular location">
    <subcellularLocation>
        <location evidence="1">Cell inner membrane</location>
        <topology evidence="1">Multi-pass membrane protein</topology>
    </subcellularLocation>
</comment>
<comment type="similarity">
    <text evidence="1">Belongs to the complex I subunit 2 family.</text>
</comment>
<proteinExistence type="inferred from homology"/>
<dbReference type="EC" id="7.1.1.-" evidence="1"/>
<dbReference type="EMBL" id="CP000698">
    <property type="protein sequence ID" value="ABQ24529.1"/>
    <property type="molecule type" value="Genomic_DNA"/>
</dbReference>
<dbReference type="RefSeq" id="WP_011937256.1">
    <property type="nucleotide sequence ID" value="NC_009483.1"/>
</dbReference>
<dbReference type="SMR" id="A5GD16"/>
<dbReference type="STRING" id="351605.Gura_0313"/>
<dbReference type="KEGG" id="gur:Gura_0313"/>
<dbReference type="HOGENOM" id="CLU_007100_1_5_7"/>
<dbReference type="OrthoDB" id="9805769at2"/>
<dbReference type="Proteomes" id="UP000006695">
    <property type="component" value="Chromosome"/>
</dbReference>
<dbReference type="GO" id="GO:0005886">
    <property type="term" value="C:plasma membrane"/>
    <property type="evidence" value="ECO:0007669"/>
    <property type="project" value="UniProtKB-SubCell"/>
</dbReference>
<dbReference type="GO" id="GO:0008137">
    <property type="term" value="F:NADH dehydrogenase (ubiquinone) activity"/>
    <property type="evidence" value="ECO:0007669"/>
    <property type="project" value="InterPro"/>
</dbReference>
<dbReference type="GO" id="GO:0050136">
    <property type="term" value="F:NADH:ubiquinone reductase (non-electrogenic) activity"/>
    <property type="evidence" value="ECO:0007669"/>
    <property type="project" value="UniProtKB-UniRule"/>
</dbReference>
<dbReference type="GO" id="GO:0048038">
    <property type="term" value="F:quinone binding"/>
    <property type="evidence" value="ECO:0007669"/>
    <property type="project" value="UniProtKB-KW"/>
</dbReference>
<dbReference type="GO" id="GO:0042773">
    <property type="term" value="P:ATP synthesis coupled electron transport"/>
    <property type="evidence" value="ECO:0007669"/>
    <property type="project" value="InterPro"/>
</dbReference>
<dbReference type="HAMAP" id="MF_00445">
    <property type="entry name" value="NDH1_NuoN_1"/>
    <property type="match status" value="1"/>
</dbReference>
<dbReference type="InterPro" id="IPR010096">
    <property type="entry name" value="NADH-Q_OxRdtase_suN/2"/>
</dbReference>
<dbReference type="InterPro" id="IPR001750">
    <property type="entry name" value="ND/Mrp_TM"/>
</dbReference>
<dbReference type="NCBIfam" id="TIGR01770">
    <property type="entry name" value="NDH_I_N"/>
    <property type="match status" value="1"/>
</dbReference>
<dbReference type="PANTHER" id="PTHR22773">
    <property type="entry name" value="NADH DEHYDROGENASE"/>
    <property type="match status" value="1"/>
</dbReference>
<dbReference type="Pfam" id="PF00361">
    <property type="entry name" value="Proton_antipo_M"/>
    <property type="match status" value="1"/>
</dbReference>
<dbReference type="PRINTS" id="PR01434">
    <property type="entry name" value="NADHDHGNASE5"/>
</dbReference>
<protein>
    <recommendedName>
        <fullName evidence="1">NADH-quinone oxidoreductase subunit N</fullName>
        <ecNumber evidence="1">7.1.1.-</ecNumber>
    </recommendedName>
    <alternativeName>
        <fullName evidence="1">NADH dehydrogenase I subunit N</fullName>
    </alternativeName>
    <alternativeName>
        <fullName evidence="1">NDH-1 subunit N</fullName>
    </alternativeName>
</protein>
<gene>
    <name evidence="1" type="primary">nuoN</name>
    <name type="ordered locus">Gura_0313</name>
</gene>